<dbReference type="EMBL" id="JQ247015">
    <property type="protein sequence ID" value="AFU76492.1"/>
    <property type="molecule type" value="mRNA"/>
</dbReference>
<dbReference type="SMR" id="K9MCH1"/>
<dbReference type="GO" id="GO:0005576">
    <property type="term" value="C:extracellular region"/>
    <property type="evidence" value="ECO:0007669"/>
    <property type="project" value="UniProtKB-SubCell"/>
</dbReference>
<dbReference type="GO" id="GO:0030550">
    <property type="term" value="F:acetylcholine receptor inhibitor activity"/>
    <property type="evidence" value="ECO:0007669"/>
    <property type="project" value="UniProtKB-KW"/>
</dbReference>
<dbReference type="GO" id="GO:0090729">
    <property type="term" value="F:toxin activity"/>
    <property type="evidence" value="ECO:0007669"/>
    <property type="project" value="UniProtKB-KW"/>
</dbReference>
<dbReference type="CDD" id="cd00206">
    <property type="entry name" value="TFP_snake_toxin"/>
    <property type="match status" value="1"/>
</dbReference>
<dbReference type="FunFam" id="2.10.60.10:FF:000024">
    <property type="entry name" value="Cytotoxin 1"/>
    <property type="match status" value="1"/>
</dbReference>
<dbReference type="Gene3D" id="2.10.60.10">
    <property type="entry name" value="CD59"/>
    <property type="match status" value="1"/>
</dbReference>
<dbReference type="InterPro" id="IPR003571">
    <property type="entry name" value="Snake_3FTx"/>
</dbReference>
<dbReference type="InterPro" id="IPR045860">
    <property type="entry name" value="Snake_toxin-like_sf"/>
</dbReference>
<dbReference type="InterPro" id="IPR018354">
    <property type="entry name" value="Snake_toxin_con_site"/>
</dbReference>
<dbReference type="InterPro" id="IPR054131">
    <property type="entry name" value="Toxin_cobra-type"/>
</dbReference>
<dbReference type="Pfam" id="PF21947">
    <property type="entry name" value="Toxin_cobra-type"/>
    <property type="match status" value="1"/>
</dbReference>
<dbReference type="SUPFAM" id="SSF57302">
    <property type="entry name" value="Snake toxin-like"/>
    <property type="match status" value="1"/>
</dbReference>
<dbReference type="PROSITE" id="PS00272">
    <property type="entry name" value="SNAKE_TOXIN"/>
    <property type="match status" value="1"/>
</dbReference>
<protein>
    <recommendedName>
        <fullName evidence="4">Three-finger toxin A1</fullName>
        <shortName evidence="3">MlatA1</shortName>
    </recommendedName>
    <alternativeName>
        <fullName evidence="3">Short chain alpha-neurotoxin A1</fullName>
    </alternativeName>
</protein>
<keyword id="KW-0008">Acetylcholine receptor inhibiting toxin</keyword>
<keyword id="KW-0903">Direct protein sequencing</keyword>
<keyword id="KW-1015">Disulfide bond</keyword>
<keyword id="KW-0528">Neurotoxin</keyword>
<keyword id="KW-0629">Postsynaptic neurotoxin</keyword>
<keyword id="KW-0964">Secreted</keyword>
<keyword id="KW-0732">Signal</keyword>
<keyword id="KW-0800">Toxin</keyword>
<sequence>MKTLLLTLVVVTIVCLDFGHTRICYNQQSSQPPTTKTCSEGQCYKKTWRDHRGTIIERGCACPNVKPGIQISCCTSDKCNG</sequence>
<organism>
    <name type="scientific">Micrurus laticollaris</name>
    <name type="common">Balsas coral snake</name>
    <dbReference type="NCBI Taxonomy" id="1240351"/>
    <lineage>
        <taxon>Eukaryota</taxon>
        <taxon>Metazoa</taxon>
        <taxon>Chordata</taxon>
        <taxon>Craniata</taxon>
        <taxon>Vertebrata</taxon>
        <taxon>Euteleostomi</taxon>
        <taxon>Lepidosauria</taxon>
        <taxon>Squamata</taxon>
        <taxon>Bifurcata</taxon>
        <taxon>Unidentata</taxon>
        <taxon>Episquamata</taxon>
        <taxon>Toxicofera</taxon>
        <taxon>Serpentes</taxon>
        <taxon>Colubroidea</taxon>
        <taxon>Elapidae</taxon>
        <taxon>Elapinae</taxon>
        <taxon>Micrurus</taxon>
    </lineage>
</organism>
<comment type="function">
    <text evidence="2">Binds and inhibits fetal (alpha-1-beta-1-gamma-delta/CHRNA1-CHRNB1-CHRNG-CHRND, IC(50)=1.4 nM), adult (alpha-1-beta-1-delta-epsilon/CHRNA1-CHRNB1-CHRND-CHRNE, IC(50)=12 nM) and neuronal alpha-7/CHRNA7 (IC(50)=400 nM) nicotinic acetylcholine receptors (nAChR) thereby impairing neuromuscular and neuronal transmissions.</text>
</comment>
<comment type="subcellular location">
    <subcellularLocation>
        <location evidence="2">Secreted</location>
    </subcellularLocation>
</comment>
<comment type="tissue specificity">
    <text evidence="4">Expressed by the venom gland.</text>
</comment>
<comment type="mass spectrometry"/>
<comment type="toxic dose">
    <text evidence="2">LD(50) is 63.5 ug/kg by intravenous injection into mice (1.27 ug/mouse).</text>
</comment>
<comment type="similarity">
    <text evidence="4">Belongs to the three-finger toxin family. Short-chain subfamily. Type I alpha-neurotoxin sub-subfamily.</text>
</comment>
<name>3S11_MICLL</name>
<feature type="signal peptide" evidence="2">
    <location>
        <begin position="1"/>
        <end position="21"/>
    </location>
</feature>
<feature type="chain" id="PRO_0000430894" description="Three-finger toxin A1" evidence="5">
    <location>
        <begin position="22"/>
        <end position="81"/>
    </location>
</feature>
<feature type="disulfide bond" evidence="1">
    <location>
        <begin position="24"/>
        <end position="43"/>
    </location>
</feature>
<feature type="disulfide bond" evidence="1">
    <location>
        <begin position="38"/>
        <end position="60"/>
    </location>
</feature>
<feature type="disulfide bond" evidence="1">
    <location>
        <begin position="62"/>
        <end position="73"/>
    </location>
</feature>
<feature type="disulfide bond" evidence="1">
    <location>
        <begin position="74"/>
        <end position="79"/>
    </location>
</feature>
<feature type="sequence conflict" description="In Ref. 1; AA sequence." evidence="2" ref="1">
    <original>T</original>
    <variation>Q</variation>
    <location>
        <position position="75"/>
    </location>
</feature>
<evidence type="ECO:0000250" key="1">
    <source>
        <dbReference type="UniProtKB" id="P60775"/>
    </source>
</evidence>
<evidence type="ECO:0000269" key="2">
    <source>
    </source>
</evidence>
<evidence type="ECO:0000303" key="3">
    <source>
    </source>
</evidence>
<evidence type="ECO:0000305" key="4"/>
<evidence type="ECO:0000305" key="5">
    <source>
    </source>
</evidence>
<reference key="1">
    <citation type="journal article" date="2013" name="Toxicon">
        <title>Isolation, characterization, cloning and expression of an alpha-neurotoxin from the venom of the Mexican coral snake Micrurus laticollaris (Squamata: Elapidae).</title>
        <authorList>
            <person name="Carbajal-Saucedo A."/>
            <person name="Lopez-Vera E."/>
            <person name="Benard-Valle M."/>
            <person name="Smith E.N."/>
            <person name="Zamudio F."/>
            <person name="de Roodt A.R."/>
            <person name="Olvera-Rodriguez A."/>
        </authorList>
    </citation>
    <scope>NUCLEOTIDE SEQUENCE [MRNA]</scope>
    <scope>PROTEIN SEQUENCE OF 22-51 AND 59-77</scope>
    <scope>SUBCELLULAR LOCATION</scope>
    <scope>TOXIC DOSE</scope>
    <scope>FUNCTION</scope>
    <scope>MASS SPECTROMETRY</scope>
    <source>
        <tissue>Venom</tissue>
        <tissue>Venom gland</tissue>
    </source>
</reference>
<proteinExistence type="evidence at protein level"/>
<accession>K9MCH1</accession>